<gene>
    <name evidence="1" type="primary">tsf</name>
    <name type="ordered locus">Aave_1824</name>
</gene>
<organism>
    <name type="scientific">Paracidovorax citrulli (strain AAC00-1)</name>
    <name type="common">Acidovorax citrulli</name>
    <dbReference type="NCBI Taxonomy" id="397945"/>
    <lineage>
        <taxon>Bacteria</taxon>
        <taxon>Pseudomonadati</taxon>
        <taxon>Pseudomonadota</taxon>
        <taxon>Betaproteobacteria</taxon>
        <taxon>Burkholderiales</taxon>
        <taxon>Comamonadaceae</taxon>
        <taxon>Paracidovorax</taxon>
    </lineage>
</organism>
<proteinExistence type="inferred from homology"/>
<keyword id="KW-0963">Cytoplasm</keyword>
<keyword id="KW-0251">Elongation factor</keyword>
<keyword id="KW-0648">Protein biosynthesis</keyword>
<sequence>MAAITASMVAELRAKTDAPMMECKKALTEADGDLAKAEELLRVKLGTKAGKAAARITAEGVVASFIEGTTGALIEVNSETDFVSKNDSFIALAKAAAELVAKHNPADVEALGALPYSQESFGPTLEEVRKGLIGKIGENMSFRRFKRFSGSKLASYLHGTRIGVVVEFDGDETAAKDVAMHIAAMKPVALTSADVPAELIEKERTVAAAKAAESGKPADIAAKMVEGSVQKYLKEVSLFDQVFVKAADGKQTVGQMLKAANTTVKGFTLYVVGEGIEKKVDDFAAEVAAQVAAAKAAA</sequence>
<dbReference type="EMBL" id="CP000512">
    <property type="protein sequence ID" value="ABM32408.1"/>
    <property type="molecule type" value="Genomic_DNA"/>
</dbReference>
<dbReference type="RefSeq" id="WP_011794954.1">
    <property type="nucleotide sequence ID" value="NC_008752.1"/>
</dbReference>
<dbReference type="SMR" id="A1TN70"/>
<dbReference type="STRING" id="397945.Aave_1824"/>
<dbReference type="GeneID" id="79793167"/>
<dbReference type="KEGG" id="aav:Aave_1824"/>
<dbReference type="eggNOG" id="COG0264">
    <property type="taxonomic scope" value="Bacteria"/>
</dbReference>
<dbReference type="HOGENOM" id="CLU_047155_0_2_4"/>
<dbReference type="OrthoDB" id="9808348at2"/>
<dbReference type="Proteomes" id="UP000002596">
    <property type="component" value="Chromosome"/>
</dbReference>
<dbReference type="GO" id="GO:0005737">
    <property type="term" value="C:cytoplasm"/>
    <property type="evidence" value="ECO:0007669"/>
    <property type="project" value="UniProtKB-SubCell"/>
</dbReference>
<dbReference type="GO" id="GO:0003746">
    <property type="term" value="F:translation elongation factor activity"/>
    <property type="evidence" value="ECO:0007669"/>
    <property type="project" value="UniProtKB-UniRule"/>
</dbReference>
<dbReference type="CDD" id="cd14275">
    <property type="entry name" value="UBA_EF-Ts"/>
    <property type="match status" value="1"/>
</dbReference>
<dbReference type="FunFam" id="1.10.286.20:FF:000001">
    <property type="entry name" value="Elongation factor Ts"/>
    <property type="match status" value="1"/>
</dbReference>
<dbReference type="FunFam" id="1.10.8.10:FF:000001">
    <property type="entry name" value="Elongation factor Ts"/>
    <property type="match status" value="1"/>
</dbReference>
<dbReference type="Gene3D" id="1.10.286.20">
    <property type="match status" value="1"/>
</dbReference>
<dbReference type="Gene3D" id="1.10.8.10">
    <property type="entry name" value="DNA helicase RuvA subunit, C-terminal domain"/>
    <property type="match status" value="1"/>
</dbReference>
<dbReference type="Gene3D" id="3.30.479.20">
    <property type="entry name" value="Elongation factor Ts, dimerisation domain"/>
    <property type="match status" value="2"/>
</dbReference>
<dbReference type="HAMAP" id="MF_00050">
    <property type="entry name" value="EF_Ts"/>
    <property type="match status" value="1"/>
</dbReference>
<dbReference type="InterPro" id="IPR036402">
    <property type="entry name" value="EF-Ts_dimer_sf"/>
</dbReference>
<dbReference type="InterPro" id="IPR001816">
    <property type="entry name" value="Transl_elong_EFTs/EF1B"/>
</dbReference>
<dbReference type="InterPro" id="IPR014039">
    <property type="entry name" value="Transl_elong_EFTs/EF1B_dimer"/>
</dbReference>
<dbReference type="InterPro" id="IPR018101">
    <property type="entry name" value="Transl_elong_Ts_CS"/>
</dbReference>
<dbReference type="InterPro" id="IPR009060">
    <property type="entry name" value="UBA-like_sf"/>
</dbReference>
<dbReference type="NCBIfam" id="TIGR00116">
    <property type="entry name" value="tsf"/>
    <property type="match status" value="1"/>
</dbReference>
<dbReference type="PANTHER" id="PTHR11741">
    <property type="entry name" value="ELONGATION FACTOR TS"/>
    <property type="match status" value="1"/>
</dbReference>
<dbReference type="PANTHER" id="PTHR11741:SF0">
    <property type="entry name" value="ELONGATION FACTOR TS, MITOCHONDRIAL"/>
    <property type="match status" value="1"/>
</dbReference>
<dbReference type="Pfam" id="PF00889">
    <property type="entry name" value="EF_TS"/>
    <property type="match status" value="1"/>
</dbReference>
<dbReference type="SUPFAM" id="SSF54713">
    <property type="entry name" value="Elongation factor Ts (EF-Ts), dimerisation domain"/>
    <property type="match status" value="2"/>
</dbReference>
<dbReference type="SUPFAM" id="SSF46934">
    <property type="entry name" value="UBA-like"/>
    <property type="match status" value="1"/>
</dbReference>
<dbReference type="PROSITE" id="PS01127">
    <property type="entry name" value="EF_TS_2"/>
    <property type="match status" value="1"/>
</dbReference>
<reference key="1">
    <citation type="submission" date="2006-12" db="EMBL/GenBank/DDBJ databases">
        <title>Complete sequence of Acidovorax avenae subsp. citrulli AAC00-1.</title>
        <authorList>
            <person name="Copeland A."/>
            <person name="Lucas S."/>
            <person name="Lapidus A."/>
            <person name="Barry K."/>
            <person name="Detter J.C."/>
            <person name="Glavina del Rio T."/>
            <person name="Dalin E."/>
            <person name="Tice H."/>
            <person name="Pitluck S."/>
            <person name="Kiss H."/>
            <person name="Brettin T."/>
            <person name="Bruce D."/>
            <person name="Han C."/>
            <person name="Tapia R."/>
            <person name="Gilna P."/>
            <person name="Schmutz J."/>
            <person name="Larimer F."/>
            <person name="Land M."/>
            <person name="Hauser L."/>
            <person name="Kyrpides N."/>
            <person name="Kim E."/>
            <person name="Stahl D."/>
            <person name="Richardson P."/>
        </authorList>
    </citation>
    <scope>NUCLEOTIDE SEQUENCE [LARGE SCALE GENOMIC DNA]</scope>
    <source>
        <strain>AAC00-1</strain>
    </source>
</reference>
<name>EFTS_PARC0</name>
<feature type="chain" id="PRO_1000006042" description="Elongation factor Ts">
    <location>
        <begin position="1"/>
        <end position="298"/>
    </location>
</feature>
<feature type="region of interest" description="Involved in Mg(2+) ion dislocation from EF-Tu" evidence="1">
    <location>
        <begin position="80"/>
        <end position="83"/>
    </location>
</feature>
<protein>
    <recommendedName>
        <fullName evidence="1">Elongation factor Ts</fullName>
        <shortName evidence="1">EF-Ts</shortName>
    </recommendedName>
</protein>
<accession>A1TN70</accession>
<evidence type="ECO:0000255" key="1">
    <source>
        <dbReference type="HAMAP-Rule" id="MF_00050"/>
    </source>
</evidence>
<comment type="function">
    <text evidence="1">Associates with the EF-Tu.GDP complex and induces the exchange of GDP to GTP. It remains bound to the aminoacyl-tRNA.EF-Tu.GTP complex up to the GTP hydrolysis stage on the ribosome.</text>
</comment>
<comment type="subcellular location">
    <subcellularLocation>
        <location evidence="1">Cytoplasm</location>
    </subcellularLocation>
</comment>
<comment type="similarity">
    <text evidence="1">Belongs to the EF-Ts family.</text>
</comment>